<gene>
    <name type="ordered locus">SE_1024</name>
</gene>
<feature type="chain" id="PRO_0000094995" description="UPF0291 protein SE_1024">
    <location>
        <begin position="1"/>
        <end position="78"/>
    </location>
</feature>
<feature type="region of interest" description="Disordered" evidence="2">
    <location>
        <begin position="53"/>
        <end position="78"/>
    </location>
</feature>
<feature type="compositionally biased region" description="Basic and acidic residues" evidence="2">
    <location>
        <begin position="64"/>
        <end position="78"/>
    </location>
</feature>
<comment type="subcellular location">
    <subcellularLocation>
        <location evidence="1">Cytoplasm</location>
    </subcellularLocation>
</comment>
<comment type="similarity">
    <text evidence="1">Belongs to the UPF0291 family.</text>
</comment>
<keyword id="KW-0963">Cytoplasm</keyword>
<sequence>MSKENLNIDRINELARKKKEHGLTNEEAKEQTKLRRQYLEEFRKGFKQQIENTKVIDPEGNDVTPEKLKKIQEEKHNK</sequence>
<organism>
    <name type="scientific">Staphylococcus epidermidis (strain ATCC 12228 / FDA PCI 1200)</name>
    <dbReference type="NCBI Taxonomy" id="176280"/>
    <lineage>
        <taxon>Bacteria</taxon>
        <taxon>Bacillati</taxon>
        <taxon>Bacillota</taxon>
        <taxon>Bacilli</taxon>
        <taxon>Bacillales</taxon>
        <taxon>Staphylococcaceae</taxon>
        <taxon>Staphylococcus</taxon>
    </lineage>
</organism>
<protein>
    <recommendedName>
        <fullName evidence="1">UPF0291 protein SE_1024</fullName>
    </recommendedName>
</protein>
<proteinExistence type="inferred from homology"/>
<name>Y1024_STAES</name>
<evidence type="ECO:0000255" key="1">
    <source>
        <dbReference type="HAMAP-Rule" id="MF_01103"/>
    </source>
</evidence>
<evidence type="ECO:0000256" key="2">
    <source>
        <dbReference type="SAM" id="MobiDB-lite"/>
    </source>
</evidence>
<accession>Q8CSP4</accession>
<reference key="1">
    <citation type="journal article" date="2003" name="Mol. Microbiol.">
        <title>Genome-based analysis of virulence genes in a non-biofilm-forming Staphylococcus epidermidis strain (ATCC 12228).</title>
        <authorList>
            <person name="Zhang Y.-Q."/>
            <person name="Ren S.-X."/>
            <person name="Li H.-L."/>
            <person name="Wang Y.-X."/>
            <person name="Fu G."/>
            <person name="Yang J."/>
            <person name="Qin Z.-Q."/>
            <person name="Miao Y.-G."/>
            <person name="Wang W.-Y."/>
            <person name="Chen R.-S."/>
            <person name="Shen Y."/>
            <person name="Chen Z."/>
            <person name="Yuan Z.-H."/>
            <person name="Zhao G.-P."/>
            <person name="Qu D."/>
            <person name="Danchin A."/>
            <person name="Wen Y.-M."/>
        </authorList>
    </citation>
    <scope>NUCLEOTIDE SEQUENCE [LARGE SCALE GENOMIC DNA]</scope>
    <source>
        <strain>ATCC 12228 / FDA PCI 1200</strain>
    </source>
</reference>
<dbReference type="EMBL" id="AE015929">
    <property type="protein sequence ID" value="AAO04621.1"/>
    <property type="molecule type" value="Genomic_DNA"/>
</dbReference>
<dbReference type="RefSeq" id="NP_764579.1">
    <property type="nucleotide sequence ID" value="NC_004461.1"/>
</dbReference>
<dbReference type="RefSeq" id="WP_001831015.1">
    <property type="nucleotide sequence ID" value="NZ_WBME01000057.1"/>
</dbReference>
<dbReference type="SMR" id="Q8CSP4"/>
<dbReference type="KEGG" id="sep:SE_1024"/>
<dbReference type="PATRIC" id="fig|176280.10.peg.999"/>
<dbReference type="eggNOG" id="COG4224">
    <property type="taxonomic scope" value="Bacteria"/>
</dbReference>
<dbReference type="HOGENOM" id="CLU_173137_0_2_9"/>
<dbReference type="OrthoDB" id="390105at2"/>
<dbReference type="Proteomes" id="UP000001411">
    <property type="component" value="Chromosome"/>
</dbReference>
<dbReference type="GO" id="GO:0005737">
    <property type="term" value="C:cytoplasm"/>
    <property type="evidence" value="ECO:0007669"/>
    <property type="project" value="UniProtKB-SubCell"/>
</dbReference>
<dbReference type="Gene3D" id="1.10.287.540">
    <property type="entry name" value="Helix hairpin bin"/>
    <property type="match status" value="1"/>
</dbReference>
<dbReference type="HAMAP" id="MF_01103">
    <property type="entry name" value="UPF0291"/>
    <property type="match status" value="1"/>
</dbReference>
<dbReference type="InterPro" id="IPR009242">
    <property type="entry name" value="DUF896"/>
</dbReference>
<dbReference type="PANTHER" id="PTHR37300">
    <property type="entry name" value="UPF0291 PROTEIN CBO2609/CLC_2481"/>
    <property type="match status" value="1"/>
</dbReference>
<dbReference type="PANTHER" id="PTHR37300:SF1">
    <property type="entry name" value="UPF0291 PROTEIN YNZC"/>
    <property type="match status" value="1"/>
</dbReference>
<dbReference type="Pfam" id="PF05979">
    <property type="entry name" value="DUF896"/>
    <property type="match status" value="1"/>
</dbReference>
<dbReference type="SUPFAM" id="SSF158221">
    <property type="entry name" value="YnzC-like"/>
    <property type="match status" value="1"/>
</dbReference>